<accession>A7F9L8</accession>
<feature type="chain" id="PRO_0000337290" description="Plasma membrane fusion protein prm1">
    <location>
        <begin position="1"/>
        <end position="795"/>
    </location>
</feature>
<feature type="topological domain" description="Extracellular" evidence="1">
    <location>
        <begin position="1"/>
        <end position="66"/>
    </location>
</feature>
<feature type="transmembrane region" description="Helical" evidence="2">
    <location>
        <begin position="67"/>
        <end position="87"/>
    </location>
</feature>
<feature type="topological domain" description="Cytoplasmic" evidence="1">
    <location>
        <begin position="88"/>
        <end position="149"/>
    </location>
</feature>
<feature type="transmembrane region" description="Helical" evidence="2">
    <location>
        <begin position="150"/>
        <end position="170"/>
    </location>
</feature>
<feature type="topological domain" description="Extracellular" evidence="1">
    <location>
        <begin position="171"/>
        <end position="330"/>
    </location>
</feature>
<feature type="transmembrane region" description="Helical" evidence="2">
    <location>
        <begin position="331"/>
        <end position="351"/>
    </location>
</feature>
<feature type="topological domain" description="Cytoplasmic" evidence="1">
    <location>
        <begin position="352"/>
        <end position="421"/>
    </location>
</feature>
<feature type="transmembrane region" description="Helical" evidence="2">
    <location>
        <begin position="422"/>
        <end position="442"/>
    </location>
</feature>
<feature type="topological domain" description="Extracellular" evidence="1">
    <location>
        <begin position="443"/>
        <end position="616"/>
    </location>
</feature>
<feature type="transmembrane region" description="Helical" evidence="2">
    <location>
        <begin position="617"/>
        <end position="637"/>
    </location>
</feature>
<feature type="topological domain" description="Cytoplasmic" evidence="1">
    <location>
        <begin position="638"/>
        <end position="795"/>
    </location>
</feature>
<feature type="region of interest" description="Disordered" evidence="3">
    <location>
        <begin position="11"/>
        <end position="37"/>
    </location>
</feature>
<feature type="region of interest" description="Disordered" evidence="3">
    <location>
        <begin position="736"/>
        <end position="795"/>
    </location>
</feature>
<feature type="compositionally biased region" description="Polar residues" evidence="3">
    <location>
        <begin position="13"/>
        <end position="24"/>
    </location>
</feature>
<feature type="compositionally biased region" description="Basic and acidic residues" evidence="3">
    <location>
        <begin position="752"/>
        <end position="762"/>
    </location>
</feature>
<feature type="glycosylation site" description="N-linked (GlcNAc...) asparagine" evidence="2">
    <location>
        <position position="189"/>
    </location>
</feature>
<feature type="glycosylation site" description="N-linked (GlcNAc...) asparagine" evidence="2">
    <location>
        <position position="259"/>
    </location>
</feature>
<feature type="glycosylation site" description="N-linked (GlcNAc...) asparagine" evidence="2">
    <location>
        <position position="270"/>
    </location>
</feature>
<feature type="glycosylation site" description="N-linked (GlcNAc...) asparagine" evidence="2">
    <location>
        <position position="288"/>
    </location>
</feature>
<feature type="glycosylation site" description="N-linked (GlcNAc...) asparagine" evidence="2">
    <location>
        <position position="469"/>
    </location>
</feature>
<feature type="glycosylation site" description="N-linked (GlcNAc...) asparagine" evidence="2">
    <location>
        <position position="483"/>
    </location>
</feature>
<feature type="glycosylation site" description="N-linked (GlcNAc...) asparagine" evidence="2">
    <location>
        <position position="498"/>
    </location>
</feature>
<feature type="glycosylation site" description="N-linked (GlcNAc...) asparagine" evidence="2">
    <location>
        <position position="505"/>
    </location>
</feature>
<feature type="glycosylation site" description="N-linked (GlcNAc...) asparagine" evidence="2">
    <location>
        <position position="520"/>
    </location>
</feature>
<feature type="glycosylation site" description="N-linked (GlcNAc...) asparagine" evidence="2">
    <location>
        <position position="580"/>
    </location>
</feature>
<dbReference type="EMBL" id="CH476652">
    <property type="protein sequence ID" value="EDO00429.1"/>
    <property type="molecule type" value="Genomic_DNA"/>
</dbReference>
<dbReference type="RefSeq" id="XP_001584686.1">
    <property type="nucleotide sequence ID" value="XM_001584636.1"/>
</dbReference>
<dbReference type="FunCoup" id="A7F9L8">
    <property type="interactions" value="17"/>
</dbReference>
<dbReference type="STRING" id="665079.A7F9L8"/>
<dbReference type="GlyCosmos" id="A7F9L8">
    <property type="glycosylation" value="10 sites, No reported glycans"/>
</dbReference>
<dbReference type="GeneID" id="5480744"/>
<dbReference type="KEGG" id="ssl:SS1G_14299"/>
<dbReference type="VEuPathDB" id="FungiDB:sscle_16g111210"/>
<dbReference type="InParanoid" id="A7F9L8"/>
<dbReference type="OMA" id="NVFGWVN"/>
<dbReference type="OrthoDB" id="5356111at2759"/>
<dbReference type="Proteomes" id="UP000001312">
    <property type="component" value="Unassembled WGS sequence"/>
</dbReference>
<dbReference type="GO" id="GO:0043332">
    <property type="term" value="C:mating projection tip"/>
    <property type="evidence" value="ECO:0000318"/>
    <property type="project" value="GO_Central"/>
</dbReference>
<dbReference type="GO" id="GO:0005886">
    <property type="term" value="C:plasma membrane"/>
    <property type="evidence" value="ECO:0007669"/>
    <property type="project" value="UniProtKB-SubCell"/>
</dbReference>
<dbReference type="GO" id="GO:0032220">
    <property type="term" value="P:plasma membrane fusion involved in cytogamy"/>
    <property type="evidence" value="ECO:0000318"/>
    <property type="project" value="GO_Central"/>
</dbReference>
<dbReference type="InterPro" id="IPR026777">
    <property type="entry name" value="PRM1"/>
</dbReference>
<dbReference type="PANTHER" id="PTHR31030">
    <property type="entry name" value="PLASMA MEMBRANE FUSION PROTEIN PRM1"/>
    <property type="match status" value="1"/>
</dbReference>
<dbReference type="PANTHER" id="PTHR31030:SF1">
    <property type="entry name" value="PLASMA MEMBRANE FUSION PROTEIN PRM1"/>
    <property type="match status" value="1"/>
</dbReference>
<gene>
    <name type="primary">prm1</name>
    <name type="ORF">SS1G_14299</name>
</gene>
<proteinExistence type="inferred from homology"/>
<comment type="function">
    <text evidence="1">Involved in cell fusion during mating by stabilizing the plasma membrane fusion event.</text>
</comment>
<comment type="subcellular location">
    <subcellularLocation>
        <location evidence="1">Cell membrane</location>
        <topology evidence="1">Multi-pass membrane protein</topology>
    </subcellularLocation>
</comment>
<comment type="similarity">
    <text evidence="4">Belongs to the PRM1 family.</text>
</comment>
<organism>
    <name type="scientific">Sclerotinia sclerotiorum (strain ATCC 18683 / 1980 / Ss-1)</name>
    <name type="common">White mold</name>
    <name type="synonym">Whetzelinia sclerotiorum</name>
    <dbReference type="NCBI Taxonomy" id="665079"/>
    <lineage>
        <taxon>Eukaryota</taxon>
        <taxon>Fungi</taxon>
        <taxon>Dikarya</taxon>
        <taxon>Ascomycota</taxon>
        <taxon>Pezizomycotina</taxon>
        <taxon>Leotiomycetes</taxon>
        <taxon>Helotiales</taxon>
        <taxon>Sclerotiniaceae</taxon>
        <taxon>Sclerotinia</taxon>
    </lineage>
</organism>
<protein>
    <recommendedName>
        <fullName>Plasma membrane fusion protein prm1</fullName>
    </recommendedName>
</protein>
<name>PRM1_SCLS1</name>
<reference key="1">
    <citation type="journal article" date="2011" name="PLoS Genet.">
        <title>Genomic analysis of the necrotrophic fungal pathogens Sclerotinia sclerotiorum and Botrytis cinerea.</title>
        <authorList>
            <person name="Amselem J."/>
            <person name="Cuomo C.A."/>
            <person name="van Kan J.A.L."/>
            <person name="Viaud M."/>
            <person name="Benito E.P."/>
            <person name="Couloux A."/>
            <person name="Coutinho P.M."/>
            <person name="de Vries R.P."/>
            <person name="Dyer P.S."/>
            <person name="Fillinger S."/>
            <person name="Fournier E."/>
            <person name="Gout L."/>
            <person name="Hahn M."/>
            <person name="Kohn L."/>
            <person name="Lapalu N."/>
            <person name="Plummer K.M."/>
            <person name="Pradier J.-M."/>
            <person name="Quevillon E."/>
            <person name="Sharon A."/>
            <person name="Simon A."/>
            <person name="ten Have A."/>
            <person name="Tudzynski B."/>
            <person name="Tudzynski P."/>
            <person name="Wincker P."/>
            <person name="Andrew M."/>
            <person name="Anthouard V."/>
            <person name="Beever R.E."/>
            <person name="Beffa R."/>
            <person name="Benoit I."/>
            <person name="Bouzid O."/>
            <person name="Brault B."/>
            <person name="Chen Z."/>
            <person name="Choquer M."/>
            <person name="Collemare J."/>
            <person name="Cotton P."/>
            <person name="Danchin E.G."/>
            <person name="Da Silva C."/>
            <person name="Gautier A."/>
            <person name="Giraud C."/>
            <person name="Giraud T."/>
            <person name="Gonzalez C."/>
            <person name="Grossetete S."/>
            <person name="Gueldener U."/>
            <person name="Henrissat B."/>
            <person name="Howlett B.J."/>
            <person name="Kodira C."/>
            <person name="Kretschmer M."/>
            <person name="Lappartient A."/>
            <person name="Leroch M."/>
            <person name="Levis C."/>
            <person name="Mauceli E."/>
            <person name="Neuveglise C."/>
            <person name="Oeser B."/>
            <person name="Pearson M."/>
            <person name="Poulain J."/>
            <person name="Poussereau N."/>
            <person name="Quesneville H."/>
            <person name="Rascle C."/>
            <person name="Schumacher J."/>
            <person name="Segurens B."/>
            <person name="Sexton A."/>
            <person name="Silva E."/>
            <person name="Sirven C."/>
            <person name="Soanes D.M."/>
            <person name="Talbot N.J."/>
            <person name="Templeton M."/>
            <person name="Yandava C."/>
            <person name="Yarden O."/>
            <person name="Zeng Q."/>
            <person name="Rollins J.A."/>
            <person name="Lebrun M.-H."/>
            <person name="Dickman M."/>
        </authorList>
    </citation>
    <scope>NUCLEOTIDE SEQUENCE [LARGE SCALE GENOMIC DNA]</scope>
    <source>
        <strain>ATCC 18683 / 1980 / Ss-1</strain>
    </source>
</reference>
<keyword id="KW-1003">Cell membrane</keyword>
<keyword id="KW-0184">Conjugation</keyword>
<keyword id="KW-0325">Glycoprotein</keyword>
<keyword id="KW-0472">Membrane</keyword>
<keyword id="KW-1185">Reference proteome</keyword>
<keyword id="KW-0812">Transmembrane</keyword>
<keyword id="KW-1133">Transmembrane helix</keyword>
<evidence type="ECO:0000250" key="1"/>
<evidence type="ECO:0000255" key="2"/>
<evidence type="ECO:0000256" key="3">
    <source>
        <dbReference type="SAM" id="MobiDB-lite"/>
    </source>
</evidence>
<evidence type="ECO:0000305" key="4"/>
<sequence>MDAFRGYLAAQKGQHNQAASNNPPFHSDHEMHHYGAHPNTNAAPADDYYTPYLGLRARLSQTWINRWTILLLLIIVRLLISLSTINGDIASAKTEALSACTSVENVGSAMASMPHYLSQGVNSMAAAGITKAVNGMMEMLYLTLTGVEEIVLFVIHMMTSTYMCLITLAITGSLQVAIQMIEDVGAFMNKSIDTITGDMSSGLKSFEDDLNGFLSKINIGGIFGSSTSPPKIDLSSEINKLNSIQIDPSTMDADLAKLNASLPTFDQVQNFTDSIIKLPFEEVKKLVNESKIGYKFDDSVFPVPQKKSLTFCSDNTAIQDFFIGLVKTLNIAKKIMLIVLIIAAILACVPMAYREIWGWRSMQRRAALLKAHNYTNELDILYQAHRPYTSQFGLKLSRRFKGQKNQILARWFIAYATSIPALFVLALGMAGLFTCLCQFIILRTIEKEIPALAAEVGDFAEHVVQALNNASEAWALGANSVINNTNTDINENVFGWVNTTTGAINETLNVFTDEMTKALNVTFGGTILYKPIMGVFECLVGLKVAGIEKGLTWVSDHAHVEFPEFQPDVFSLGAAASLTNSTADDNFLANPATSTTDEITDAVVKVGKKLEAVIKQEALISASLVIVYFVIVFIGFVRVVIGMCGRDKSRAEGGSGPGTLYRNGFPHQHLPVIREEKFGSNASDGWHEEHMRAGGDTIRMPFGGDGAADDLPYDGAPAPKYEASIAPVTTEMGSERLGVVPGGRANTNRGPWVRDEKGREGWEADDAQMRATSSYGFLENGDEKSSGWGLPPRRV</sequence>